<evidence type="ECO:0000255" key="1">
    <source>
        <dbReference type="HAMAP-Rule" id="MF_00323"/>
    </source>
</evidence>
<reference key="1">
    <citation type="journal article" date="2008" name="J. Bacteriol.">
        <title>Genome sequence of the streptomycin-producing microorganism Streptomyces griseus IFO 13350.</title>
        <authorList>
            <person name="Ohnishi Y."/>
            <person name="Ishikawa J."/>
            <person name="Hara H."/>
            <person name="Suzuki H."/>
            <person name="Ikenoya M."/>
            <person name="Ikeda H."/>
            <person name="Yamashita A."/>
            <person name="Hattori M."/>
            <person name="Horinouchi S."/>
        </authorList>
    </citation>
    <scope>NUCLEOTIDE SEQUENCE [LARGE SCALE GENOMIC DNA]</scope>
    <source>
        <strain>JCM 4626 / CBS 651.72 / NBRC 13350 / KCC S-0626 / ISP 5235</strain>
    </source>
</reference>
<keyword id="KW-0963">Cytoplasm</keyword>
<keyword id="KW-0350">Heme biosynthesis</keyword>
<keyword id="KW-0408">Iron</keyword>
<keyword id="KW-0456">Lyase</keyword>
<keyword id="KW-0479">Metal-binding</keyword>
<keyword id="KW-0627">Porphyrin biosynthesis</keyword>
<accession>B1VXN6</accession>
<proteinExistence type="inferred from homology"/>
<sequence>MSDLRDPAPYDALLLLSFGGPEGPDDVVPFLANVTRGRGIPEERLKEVGQHYFLFGGVSPINEQNRALLGALRKDFADHGLDLPVYWGNRNWAPYLTDVLREMTTDGHRRIAVLATSAYASYSGCRQYRENLAESLAALEAEGLEVPRVDKLRHYFNHPGFVAPMVDGVLASLADLPEDVRAGAHLAFTTHSIPTSAADASGPVEAHGEGGAYVAEHLDVARLIVDAVRAETGIEYPWRLVYQSRSGAPHIPWLEPDICDHLETLGAEGVPAVVMAPIGFVSDHMEVLYDLDTEATAKAAEIGLPVRRSATVGDDPRFAAAVRDLLLERAATERGRAVERCALGSLGPSHDLCPVGCCPARAPKPAAAGADSPYV</sequence>
<organism>
    <name type="scientific">Streptomyces griseus subsp. griseus (strain JCM 4626 / CBS 651.72 / NBRC 13350 / KCC S-0626 / ISP 5235)</name>
    <dbReference type="NCBI Taxonomy" id="455632"/>
    <lineage>
        <taxon>Bacteria</taxon>
        <taxon>Bacillati</taxon>
        <taxon>Actinomycetota</taxon>
        <taxon>Actinomycetes</taxon>
        <taxon>Kitasatosporales</taxon>
        <taxon>Streptomycetaceae</taxon>
        <taxon>Streptomyces</taxon>
    </lineage>
</organism>
<name>CPFC_STRGG</name>
<comment type="function">
    <text evidence="1">Involved in coproporphyrin-dependent heme b biosynthesis. Catalyzes the insertion of ferrous iron into coproporphyrin III to form Fe-coproporphyrin III.</text>
</comment>
<comment type="catalytic activity">
    <reaction evidence="1">
        <text>Fe-coproporphyrin III + 2 H(+) = coproporphyrin III + Fe(2+)</text>
        <dbReference type="Rhea" id="RHEA:49572"/>
        <dbReference type="ChEBI" id="CHEBI:15378"/>
        <dbReference type="ChEBI" id="CHEBI:29033"/>
        <dbReference type="ChEBI" id="CHEBI:68438"/>
        <dbReference type="ChEBI" id="CHEBI:131725"/>
        <dbReference type="EC" id="4.99.1.9"/>
    </reaction>
    <physiologicalReaction direction="right-to-left" evidence="1">
        <dbReference type="Rhea" id="RHEA:49574"/>
    </physiologicalReaction>
</comment>
<comment type="pathway">
    <text evidence="1">Porphyrin-containing compound metabolism; protoheme biosynthesis.</text>
</comment>
<comment type="subcellular location">
    <subcellularLocation>
        <location evidence="1">Cytoplasm</location>
    </subcellularLocation>
</comment>
<comment type="similarity">
    <text evidence="1">Belongs to the ferrochelatase family.</text>
</comment>
<feature type="chain" id="PRO_1000116082" description="Coproporphyrin III ferrochelatase">
    <location>
        <begin position="1"/>
        <end position="375"/>
    </location>
</feature>
<feature type="binding site" evidence="1">
    <location>
        <position position="59"/>
    </location>
    <ligand>
        <name>Fe-coproporphyrin III</name>
        <dbReference type="ChEBI" id="CHEBI:68438"/>
    </ligand>
</feature>
<feature type="binding site" evidence="1">
    <location>
        <position position="128"/>
    </location>
    <ligand>
        <name>Fe-coproporphyrin III</name>
        <dbReference type="ChEBI" id="CHEBI:68438"/>
    </ligand>
</feature>
<feature type="binding site" evidence="1">
    <location>
        <position position="191"/>
    </location>
    <ligand>
        <name>Fe(2+)</name>
        <dbReference type="ChEBI" id="CHEBI:29033"/>
    </ligand>
</feature>
<feature type="binding site" evidence="1">
    <location>
        <position position="286"/>
    </location>
    <ligand>
        <name>Fe(2+)</name>
        <dbReference type="ChEBI" id="CHEBI:29033"/>
    </ligand>
</feature>
<protein>
    <recommendedName>
        <fullName evidence="1">Coproporphyrin III ferrochelatase</fullName>
        <ecNumber evidence="1">4.99.1.9</ecNumber>
    </recommendedName>
</protein>
<gene>
    <name evidence="1" type="primary">cpfC</name>
    <name type="ordered locus">SGR_1673</name>
</gene>
<dbReference type="EC" id="4.99.1.9" evidence="1"/>
<dbReference type="EMBL" id="AP009493">
    <property type="protein sequence ID" value="BAG18502.1"/>
    <property type="molecule type" value="Genomic_DNA"/>
</dbReference>
<dbReference type="RefSeq" id="WP_003965738.1">
    <property type="nucleotide sequence ID" value="NC_010572.1"/>
</dbReference>
<dbReference type="SMR" id="B1VXN6"/>
<dbReference type="KEGG" id="sgr:SGR_1673"/>
<dbReference type="eggNOG" id="COG0276">
    <property type="taxonomic scope" value="Bacteria"/>
</dbReference>
<dbReference type="HOGENOM" id="CLU_018884_2_0_11"/>
<dbReference type="UniPathway" id="UPA00252"/>
<dbReference type="Proteomes" id="UP000001685">
    <property type="component" value="Chromosome"/>
</dbReference>
<dbReference type="GO" id="GO:0005737">
    <property type="term" value="C:cytoplasm"/>
    <property type="evidence" value="ECO:0007669"/>
    <property type="project" value="UniProtKB-SubCell"/>
</dbReference>
<dbReference type="GO" id="GO:0004325">
    <property type="term" value="F:ferrochelatase activity"/>
    <property type="evidence" value="ECO:0007669"/>
    <property type="project" value="UniProtKB-UniRule"/>
</dbReference>
<dbReference type="GO" id="GO:0046872">
    <property type="term" value="F:metal ion binding"/>
    <property type="evidence" value="ECO:0007669"/>
    <property type="project" value="UniProtKB-KW"/>
</dbReference>
<dbReference type="GO" id="GO:0006783">
    <property type="term" value="P:heme biosynthetic process"/>
    <property type="evidence" value="ECO:0007669"/>
    <property type="project" value="UniProtKB-UniRule"/>
</dbReference>
<dbReference type="CDD" id="cd00419">
    <property type="entry name" value="Ferrochelatase_C"/>
    <property type="match status" value="1"/>
</dbReference>
<dbReference type="CDD" id="cd03411">
    <property type="entry name" value="Ferrochelatase_N"/>
    <property type="match status" value="1"/>
</dbReference>
<dbReference type="FunFam" id="3.40.50.1400:FF:000008">
    <property type="entry name" value="Ferrochelatase"/>
    <property type="match status" value="1"/>
</dbReference>
<dbReference type="Gene3D" id="3.40.50.1400">
    <property type="match status" value="2"/>
</dbReference>
<dbReference type="HAMAP" id="MF_00323">
    <property type="entry name" value="Ferrochelatase"/>
    <property type="match status" value="1"/>
</dbReference>
<dbReference type="InterPro" id="IPR001015">
    <property type="entry name" value="Ferrochelatase"/>
</dbReference>
<dbReference type="InterPro" id="IPR033644">
    <property type="entry name" value="Ferrochelatase_C"/>
</dbReference>
<dbReference type="InterPro" id="IPR033659">
    <property type="entry name" value="Ferrochelatase_N"/>
</dbReference>
<dbReference type="NCBIfam" id="NF000689">
    <property type="entry name" value="PRK00035.2-1"/>
    <property type="match status" value="1"/>
</dbReference>
<dbReference type="PANTHER" id="PTHR11108">
    <property type="entry name" value="FERROCHELATASE"/>
    <property type="match status" value="1"/>
</dbReference>
<dbReference type="PANTHER" id="PTHR11108:SF1">
    <property type="entry name" value="FERROCHELATASE, MITOCHONDRIAL"/>
    <property type="match status" value="1"/>
</dbReference>
<dbReference type="Pfam" id="PF00762">
    <property type="entry name" value="Ferrochelatase"/>
    <property type="match status" value="1"/>
</dbReference>
<dbReference type="SUPFAM" id="SSF53800">
    <property type="entry name" value="Chelatase"/>
    <property type="match status" value="1"/>
</dbReference>